<sequence length="480" mass="54026">MSKKLYIKTWGCQMNEYDSQKMAELLDSTHGFSLVEEAEQADVILLNTCSIREKAQEKVFHQLGRWKNLKDKKPDLLIGVGGCVASQEGDSIRKRAPFVDMIFGPQTLHRLPEMLNQLQHSKSPIIDVSFPEIEKFDRLPEPKADGASAFVSIMEGCSKYCTFCVVPYTRGEEVSRPLDDVLYEIAQLAEQGVREVNLLGQNVNAYRGETHDGSICRFADLVRLVATIDGIDRIRYTTSHPVEFTDDIIEAYTDVPELVNHLHLPVQSGCDRILTQMKRGHTALEYKSQIRKLKKVRPELSMSSDFIIGFPGETDEDFTATMDLIKAVDFDLSFSFIYSARPGTPAADLPDDISDQTKKDRLKLLQEQITHQALRIARQMLNTEQRVLVEGPSRKNPMELRGKTENNRTVNFVAPHSVIGQFVDIKITDVVANSLRGELVREEKEMGLRIAHSPADILANNHHMATPSNLDELGVGTFTP</sequence>
<name>MIAB_COLP3</name>
<feature type="chain" id="PRO_0000374236" description="tRNA-2-methylthio-N(6)-dimethylallyladenosine synthase">
    <location>
        <begin position="1"/>
        <end position="480"/>
    </location>
</feature>
<feature type="domain" description="MTTase N-terminal" evidence="1">
    <location>
        <begin position="3"/>
        <end position="120"/>
    </location>
</feature>
<feature type="domain" description="Radical SAM core" evidence="2">
    <location>
        <begin position="143"/>
        <end position="375"/>
    </location>
</feature>
<feature type="domain" description="TRAM" evidence="1">
    <location>
        <begin position="378"/>
        <end position="441"/>
    </location>
</feature>
<feature type="binding site" evidence="1">
    <location>
        <position position="12"/>
    </location>
    <ligand>
        <name>[4Fe-4S] cluster</name>
        <dbReference type="ChEBI" id="CHEBI:49883"/>
        <label>1</label>
    </ligand>
</feature>
<feature type="binding site" evidence="1">
    <location>
        <position position="49"/>
    </location>
    <ligand>
        <name>[4Fe-4S] cluster</name>
        <dbReference type="ChEBI" id="CHEBI:49883"/>
        <label>1</label>
    </ligand>
</feature>
<feature type="binding site" evidence="1">
    <location>
        <position position="83"/>
    </location>
    <ligand>
        <name>[4Fe-4S] cluster</name>
        <dbReference type="ChEBI" id="CHEBI:49883"/>
        <label>1</label>
    </ligand>
</feature>
<feature type="binding site" evidence="1">
    <location>
        <position position="157"/>
    </location>
    <ligand>
        <name>[4Fe-4S] cluster</name>
        <dbReference type="ChEBI" id="CHEBI:49883"/>
        <label>2</label>
        <note>4Fe-4S-S-AdoMet</note>
    </ligand>
</feature>
<feature type="binding site" evidence="1">
    <location>
        <position position="161"/>
    </location>
    <ligand>
        <name>[4Fe-4S] cluster</name>
        <dbReference type="ChEBI" id="CHEBI:49883"/>
        <label>2</label>
        <note>4Fe-4S-S-AdoMet</note>
    </ligand>
</feature>
<feature type="binding site" evidence="1">
    <location>
        <position position="164"/>
    </location>
    <ligand>
        <name>[4Fe-4S] cluster</name>
        <dbReference type="ChEBI" id="CHEBI:49883"/>
        <label>2</label>
        <note>4Fe-4S-S-AdoMet</note>
    </ligand>
</feature>
<organism>
    <name type="scientific">Colwellia psychrerythraea (strain 34H / ATCC BAA-681)</name>
    <name type="common">Vibrio psychroerythus</name>
    <dbReference type="NCBI Taxonomy" id="167879"/>
    <lineage>
        <taxon>Bacteria</taxon>
        <taxon>Pseudomonadati</taxon>
        <taxon>Pseudomonadota</taxon>
        <taxon>Gammaproteobacteria</taxon>
        <taxon>Alteromonadales</taxon>
        <taxon>Colwelliaceae</taxon>
        <taxon>Colwellia</taxon>
    </lineage>
</organism>
<proteinExistence type="inferred from homology"/>
<reference key="1">
    <citation type="journal article" date="2005" name="Proc. Natl. Acad. Sci. U.S.A.">
        <title>The psychrophilic lifestyle as revealed by the genome sequence of Colwellia psychrerythraea 34H through genomic and proteomic analyses.</title>
        <authorList>
            <person name="Methe B.A."/>
            <person name="Nelson K.E."/>
            <person name="Deming J.W."/>
            <person name="Momen B."/>
            <person name="Melamud E."/>
            <person name="Zhang X."/>
            <person name="Moult J."/>
            <person name="Madupu R."/>
            <person name="Nelson W.C."/>
            <person name="Dodson R.J."/>
            <person name="Brinkac L.M."/>
            <person name="Daugherty S.C."/>
            <person name="Durkin A.S."/>
            <person name="DeBoy R.T."/>
            <person name="Kolonay J.F."/>
            <person name="Sullivan S.A."/>
            <person name="Zhou L."/>
            <person name="Davidsen T.M."/>
            <person name="Wu M."/>
            <person name="Huston A.L."/>
            <person name="Lewis M."/>
            <person name="Weaver B."/>
            <person name="Weidman J.F."/>
            <person name="Khouri H."/>
            <person name="Utterback T.R."/>
            <person name="Feldblyum T.V."/>
            <person name="Fraser C.M."/>
        </authorList>
    </citation>
    <scope>NUCLEOTIDE SEQUENCE [LARGE SCALE GENOMIC DNA]</scope>
    <source>
        <strain>34H / ATCC BAA-681</strain>
    </source>
</reference>
<protein>
    <recommendedName>
        <fullName evidence="1">tRNA-2-methylthio-N(6)-dimethylallyladenosine synthase</fullName>
        <ecNumber evidence="1">2.8.4.3</ecNumber>
    </recommendedName>
    <alternativeName>
        <fullName evidence="1">(Dimethylallyl)adenosine tRNA methylthiotransferase MiaB</fullName>
    </alternativeName>
    <alternativeName>
        <fullName evidence="1">tRNA-i(6)A37 methylthiotransferase</fullName>
    </alternativeName>
</protein>
<evidence type="ECO:0000255" key="1">
    <source>
        <dbReference type="HAMAP-Rule" id="MF_01864"/>
    </source>
</evidence>
<evidence type="ECO:0000255" key="2">
    <source>
        <dbReference type="PROSITE-ProRule" id="PRU01266"/>
    </source>
</evidence>
<accession>Q47Y80</accession>
<comment type="function">
    <text evidence="1">Catalyzes the methylthiolation of N6-(dimethylallyl)adenosine (i(6)A), leading to the formation of 2-methylthio-N6-(dimethylallyl)adenosine (ms(2)i(6)A) at position 37 in tRNAs that read codons beginning with uridine.</text>
</comment>
<comment type="catalytic activity">
    <reaction evidence="1">
        <text>N(6)-dimethylallyladenosine(37) in tRNA + (sulfur carrier)-SH + AH2 + 2 S-adenosyl-L-methionine = 2-methylsulfanyl-N(6)-dimethylallyladenosine(37) in tRNA + (sulfur carrier)-H + 5'-deoxyadenosine + L-methionine + A + S-adenosyl-L-homocysteine + 2 H(+)</text>
        <dbReference type="Rhea" id="RHEA:37067"/>
        <dbReference type="Rhea" id="RHEA-COMP:10375"/>
        <dbReference type="Rhea" id="RHEA-COMP:10376"/>
        <dbReference type="Rhea" id="RHEA-COMP:14737"/>
        <dbReference type="Rhea" id="RHEA-COMP:14739"/>
        <dbReference type="ChEBI" id="CHEBI:13193"/>
        <dbReference type="ChEBI" id="CHEBI:15378"/>
        <dbReference type="ChEBI" id="CHEBI:17319"/>
        <dbReference type="ChEBI" id="CHEBI:17499"/>
        <dbReference type="ChEBI" id="CHEBI:29917"/>
        <dbReference type="ChEBI" id="CHEBI:57844"/>
        <dbReference type="ChEBI" id="CHEBI:57856"/>
        <dbReference type="ChEBI" id="CHEBI:59789"/>
        <dbReference type="ChEBI" id="CHEBI:64428"/>
        <dbReference type="ChEBI" id="CHEBI:74415"/>
        <dbReference type="ChEBI" id="CHEBI:74417"/>
        <dbReference type="EC" id="2.8.4.3"/>
    </reaction>
</comment>
<comment type="cofactor">
    <cofactor evidence="1">
        <name>[4Fe-4S] cluster</name>
        <dbReference type="ChEBI" id="CHEBI:49883"/>
    </cofactor>
    <text evidence="1">Binds 2 [4Fe-4S] clusters. One cluster is coordinated with 3 cysteines and an exchangeable S-adenosyl-L-methionine.</text>
</comment>
<comment type="subunit">
    <text evidence="1">Monomer.</text>
</comment>
<comment type="subcellular location">
    <subcellularLocation>
        <location evidence="1">Cytoplasm</location>
    </subcellularLocation>
</comment>
<comment type="similarity">
    <text evidence="1">Belongs to the methylthiotransferase family. MiaB subfamily.</text>
</comment>
<gene>
    <name evidence="1" type="primary">miaB</name>
    <name type="ordered locus">CPS_3572</name>
</gene>
<dbReference type="EC" id="2.8.4.3" evidence="1"/>
<dbReference type="EMBL" id="CP000083">
    <property type="protein sequence ID" value="AAZ26154.1"/>
    <property type="molecule type" value="Genomic_DNA"/>
</dbReference>
<dbReference type="RefSeq" id="WP_011044326.1">
    <property type="nucleotide sequence ID" value="NC_003910.7"/>
</dbReference>
<dbReference type="SMR" id="Q47Y80"/>
<dbReference type="STRING" id="167879.CPS_3572"/>
<dbReference type="KEGG" id="cps:CPS_3572"/>
<dbReference type="eggNOG" id="COG0621">
    <property type="taxonomic scope" value="Bacteria"/>
</dbReference>
<dbReference type="HOGENOM" id="CLU_018697_2_0_6"/>
<dbReference type="Proteomes" id="UP000000547">
    <property type="component" value="Chromosome"/>
</dbReference>
<dbReference type="GO" id="GO:0005829">
    <property type="term" value="C:cytosol"/>
    <property type="evidence" value="ECO:0007669"/>
    <property type="project" value="TreeGrafter"/>
</dbReference>
<dbReference type="GO" id="GO:0051539">
    <property type="term" value="F:4 iron, 4 sulfur cluster binding"/>
    <property type="evidence" value="ECO:0007669"/>
    <property type="project" value="UniProtKB-UniRule"/>
</dbReference>
<dbReference type="GO" id="GO:0046872">
    <property type="term" value="F:metal ion binding"/>
    <property type="evidence" value="ECO:0007669"/>
    <property type="project" value="UniProtKB-KW"/>
</dbReference>
<dbReference type="GO" id="GO:0035597">
    <property type="term" value="F:N6-isopentenyladenosine methylthiotransferase activity"/>
    <property type="evidence" value="ECO:0007669"/>
    <property type="project" value="TreeGrafter"/>
</dbReference>
<dbReference type="CDD" id="cd01335">
    <property type="entry name" value="Radical_SAM"/>
    <property type="match status" value="1"/>
</dbReference>
<dbReference type="FunFam" id="3.40.50.12160:FF:000001">
    <property type="entry name" value="tRNA-2-methylthio-N(6)-dimethylallyladenosine synthase"/>
    <property type="match status" value="1"/>
</dbReference>
<dbReference type="FunFam" id="3.80.30.20:FF:000001">
    <property type="entry name" value="tRNA-2-methylthio-N(6)-dimethylallyladenosine synthase 2"/>
    <property type="match status" value="1"/>
</dbReference>
<dbReference type="Gene3D" id="3.40.50.12160">
    <property type="entry name" value="Methylthiotransferase, N-terminal domain"/>
    <property type="match status" value="1"/>
</dbReference>
<dbReference type="Gene3D" id="3.80.30.20">
    <property type="entry name" value="tm_1862 like domain"/>
    <property type="match status" value="1"/>
</dbReference>
<dbReference type="HAMAP" id="MF_01864">
    <property type="entry name" value="tRNA_metthiotr_MiaB"/>
    <property type="match status" value="1"/>
</dbReference>
<dbReference type="InterPro" id="IPR006638">
    <property type="entry name" value="Elp3/MiaA/NifB-like_rSAM"/>
</dbReference>
<dbReference type="InterPro" id="IPR005839">
    <property type="entry name" value="Methylthiotransferase"/>
</dbReference>
<dbReference type="InterPro" id="IPR020612">
    <property type="entry name" value="Methylthiotransferase_CS"/>
</dbReference>
<dbReference type="InterPro" id="IPR013848">
    <property type="entry name" value="Methylthiotransferase_N"/>
</dbReference>
<dbReference type="InterPro" id="IPR038135">
    <property type="entry name" value="Methylthiotransferase_N_sf"/>
</dbReference>
<dbReference type="InterPro" id="IPR006463">
    <property type="entry name" value="MiaB_methiolase"/>
</dbReference>
<dbReference type="InterPro" id="IPR007197">
    <property type="entry name" value="rSAM"/>
</dbReference>
<dbReference type="InterPro" id="IPR023404">
    <property type="entry name" value="rSAM_horseshoe"/>
</dbReference>
<dbReference type="InterPro" id="IPR002792">
    <property type="entry name" value="TRAM_dom"/>
</dbReference>
<dbReference type="NCBIfam" id="TIGR01574">
    <property type="entry name" value="miaB-methiolase"/>
    <property type="match status" value="1"/>
</dbReference>
<dbReference type="NCBIfam" id="TIGR00089">
    <property type="entry name" value="MiaB/RimO family radical SAM methylthiotransferase"/>
    <property type="match status" value="1"/>
</dbReference>
<dbReference type="PANTHER" id="PTHR43020">
    <property type="entry name" value="CDK5 REGULATORY SUBUNIT-ASSOCIATED PROTEIN 1"/>
    <property type="match status" value="1"/>
</dbReference>
<dbReference type="PANTHER" id="PTHR43020:SF2">
    <property type="entry name" value="MITOCHONDRIAL TRNA METHYLTHIOTRANSFERASE CDK5RAP1"/>
    <property type="match status" value="1"/>
</dbReference>
<dbReference type="Pfam" id="PF04055">
    <property type="entry name" value="Radical_SAM"/>
    <property type="match status" value="1"/>
</dbReference>
<dbReference type="Pfam" id="PF01938">
    <property type="entry name" value="TRAM"/>
    <property type="match status" value="1"/>
</dbReference>
<dbReference type="Pfam" id="PF00919">
    <property type="entry name" value="UPF0004"/>
    <property type="match status" value="1"/>
</dbReference>
<dbReference type="SFLD" id="SFLDF00273">
    <property type="entry name" value="(dimethylallyl)adenosine_tRNA"/>
    <property type="match status" value="1"/>
</dbReference>
<dbReference type="SFLD" id="SFLDG01082">
    <property type="entry name" value="B12-binding_domain_containing"/>
    <property type="match status" value="1"/>
</dbReference>
<dbReference type="SFLD" id="SFLDG01061">
    <property type="entry name" value="methylthiotransferase"/>
    <property type="match status" value="1"/>
</dbReference>
<dbReference type="SMART" id="SM00729">
    <property type="entry name" value="Elp3"/>
    <property type="match status" value="1"/>
</dbReference>
<dbReference type="SUPFAM" id="SSF102114">
    <property type="entry name" value="Radical SAM enzymes"/>
    <property type="match status" value="1"/>
</dbReference>
<dbReference type="PROSITE" id="PS51449">
    <property type="entry name" value="MTTASE_N"/>
    <property type="match status" value="1"/>
</dbReference>
<dbReference type="PROSITE" id="PS01278">
    <property type="entry name" value="MTTASE_RADICAL"/>
    <property type="match status" value="1"/>
</dbReference>
<dbReference type="PROSITE" id="PS51918">
    <property type="entry name" value="RADICAL_SAM"/>
    <property type="match status" value="1"/>
</dbReference>
<dbReference type="PROSITE" id="PS50926">
    <property type="entry name" value="TRAM"/>
    <property type="match status" value="1"/>
</dbReference>
<keyword id="KW-0004">4Fe-4S</keyword>
<keyword id="KW-0963">Cytoplasm</keyword>
<keyword id="KW-0408">Iron</keyword>
<keyword id="KW-0411">Iron-sulfur</keyword>
<keyword id="KW-0479">Metal-binding</keyword>
<keyword id="KW-0949">S-adenosyl-L-methionine</keyword>
<keyword id="KW-0808">Transferase</keyword>
<keyword id="KW-0819">tRNA processing</keyword>